<accession>A3M0U3</accession>
<proteinExistence type="inferred from homology"/>
<evidence type="ECO:0000255" key="1">
    <source>
        <dbReference type="HAMAP-Rule" id="MF_00564"/>
    </source>
</evidence>
<organism>
    <name type="scientific">Acinetobacter baumannii (strain ATCC 17978 / DSM 105126 / CIP 53.77 / LMG 1025 / NCDC KC755 / 5377)</name>
    <dbReference type="NCBI Taxonomy" id="400667"/>
    <lineage>
        <taxon>Bacteria</taxon>
        <taxon>Pseudomonadati</taxon>
        <taxon>Pseudomonadota</taxon>
        <taxon>Gammaproteobacteria</taxon>
        <taxon>Moraxellales</taxon>
        <taxon>Moraxellaceae</taxon>
        <taxon>Acinetobacter</taxon>
        <taxon>Acinetobacter calcoaceticus/baumannii complex</taxon>
    </lineage>
</organism>
<sequence length="238" mass="26296">MRIDQRALDQLREVKITRNYTRYAEGSVLVEFGHTKVLCTASIDNSVPRFLKGQGQGWVTAEYGMLPRSTHSRCDREAARGKQTGRTQEIQRLIGRSLRAMVDLKKLGENTITIDCDVIQADGGTRTASITGAAVALVDAMNVLLAQKKIKQDPLKGLVAAISVGMYQDEVLLDLCYEEDSNCQTDLNVVMTQAGEFIEIQGTAEDKPFTRAQSNAMLEMAEKGIAELIKKQQEALGW</sequence>
<feature type="chain" id="PRO_1000129310" description="Ribonuclease PH">
    <location>
        <begin position="1"/>
        <end position="238"/>
    </location>
</feature>
<feature type="binding site" evidence="1">
    <location>
        <position position="86"/>
    </location>
    <ligand>
        <name>phosphate</name>
        <dbReference type="ChEBI" id="CHEBI:43474"/>
        <note>substrate</note>
    </ligand>
</feature>
<feature type="binding site" evidence="1">
    <location>
        <begin position="124"/>
        <end position="126"/>
    </location>
    <ligand>
        <name>phosphate</name>
        <dbReference type="ChEBI" id="CHEBI:43474"/>
        <note>substrate</note>
    </ligand>
</feature>
<gene>
    <name evidence="1" type="primary">rph</name>
    <name type="ordered locus">A1S_0042</name>
</gene>
<reference key="1">
    <citation type="journal article" date="2007" name="Genes Dev.">
        <title>New insights into Acinetobacter baumannii pathogenesis revealed by high-density pyrosequencing and transposon mutagenesis.</title>
        <authorList>
            <person name="Smith M.G."/>
            <person name="Gianoulis T.A."/>
            <person name="Pukatzki S."/>
            <person name="Mekalanos J.J."/>
            <person name="Ornston L.N."/>
            <person name="Gerstein M."/>
            <person name="Snyder M."/>
        </authorList>
    </citation>
    <scope>NUCLEOTIDE SEQUENCE [LARGE SCALE GENOMIC DNA]</scope>
    <source>
        <strain>ATCC 17978 / DSM 105126 / CIP 53.77 / LMG 1025 / NCDC KC755 / 5377</strain>
    </source>
</reference>
<protein>
    <recommendedName>
        <fullName evidence="1">Ribonuclease PH</fullName>
        <shortName evidence="1">RNase PH</shortName>
        <ecNumber evidence="1">2.7.7.56</ecNumber>
    </recommendedName>
    <alternativeName>
        <fullName evidence="1">tRNA nucleotidyltransferase</fullName>
    </alternativeName>
</protein>
<name>RNPH_ACIBT</name>
<comment type="function">
    <text evidence="1">Phosphorolytic 3'-5' exoribonuclease that plays an important role in tRNA 3'-end maturation. Removes nucleotide residues following the 3'-CCA terminus of tRNAs; can also add nucleotides to the ends of RNA molecules by using nucleoside diphosphates as substrates, but this may not be physiologically important. Probably plays a role in initiation of 16S rRNA degradation (leading to ribosome degradation) during starvation.</text>
</comment>
<comment type="catalytic activity">
    <reaction evidence="1">
        <text>tRNA(n+1) + phosphate = tRNA(n) + a ribonucleoside 5'-diphosphate</text>
        <dbReference type="Rhea" id="RHEA:10628"/>
        <dbReference type="Rhea" id="RHEA-COMP:17343"/>
        <dbReference type="Rhea" id="RHEA-COMP:17344"/>
        <dbReference type="ChEBI" id="CHEBI:43474"/>
        <dbReference type="ChEBI" id="CHEBI:57930"/>
        <dbReference type="ChEBI" id="CHEBI:173114"/>
        <dbReference type="EC" id="2.7.7.56"/>
    </reaction>
</comment>
<comment type="subunit">
    <text evidence="1">Homohexameric ring arranged as a trimer of dimers.</text>
</comment>
<comment type="similarity">
    <text evidence="1">Belongs to the RNase PH family.</text>
</comment>
<dbReference type="EC" id="2.7.7.56" evidence="1"/>
<dbReference type="EMBL" id="CP000521">
    <property type="protein sequence ID" value="ABO10537.2"/>
    <property type="molecule type" value="Genomic_DNA"/>
</dbReference>
<dbReference type="RefSeq" id="WP_001217232.1">
    <property type="nucleotide sequence ID" value="NZ_CP053098.1"/>
</dbReference>
<dbReference type="SMR" id="A3M0U3"/>
<dbReference type="GeneID" id="92892004"/>
<dbReference type="KEGG" id="acb:A1S_0042"/>
<dbReference type="HOGENOM" id="CLU_050858_0_0_6"/>
<dbReference type="GO" id="GO:0000175">
    <property type="term" value="F:3'-5'-RNA exonuclease activity"/>
    <property type="evidence" value="ECO:0007669"/>
    <property type="project" value="UniProtKB-UniRule"/>
</dbReference>
<dbReference type="GO" id="GO:0000049">
    <property type="term" value="F:tRNA binding"/>
    <property type="evidence" value="ECO:0007669"/>
    <property type="project" value="UniProtKB-UniRule"/>
</dbReference>
<dbReference type="GO" id="GO:0009022">
    <property type="term" value="F:tRNA nucleotidyltransferase activity"/>
    <property type="evidence" value="ECO:0007669"/>
    <property type="project" value="UniProtKB-UniRule"/>
</dbReference>
<dbReference type="GO" id="GO:0016075">
    <property type="term" value="P:rRNA catabolic process"/>
    <property type="evidence" value="ECO:0007669"/>
    <property type="project" value="UniProtKB-UniRule"/>
</dbReference>
<dbReference type="GO" id="GO:0006364">
    <property type="term" value="P:rRNA processing"/>
    <property type="evidence" value="ECO:0007669"/>
    <property type="project" value="UniProtKB-KW"/>
</dbReference>
<dbReference type="GO" id="GO:0008033">
    <property type="term" value="P:tRNA processing"/>
    <property type="evidence" value="ECO:0007669"/>
    <property type="project" value="UniProtKB-UniRule"/>
</dbReference>
<dbReference type="CDD" id="cd11362">
    <property type="entry name" value="RNase_PH_bact"/>
    <property type="match status" value="1"/>
</dbReference>
<dbReference type="FunFam" id="3.30.230.70:FF:000003">
    <property type="entry name" value="Ribonuclease PH"/>
    <property type="match status" value="1"/>
</dbReference>
<dbReference type="Gene3D" id="3.30.230.70">
    <property type="entry name" value="GHMP Kinase, N-terminal domain"/>
    <property type="match status" value="1"/>
</dbReference>
<dbReference type="HAMAP" id="MF_00564">
    <property type="entry name" value="RNase_PH"/>
    <property type="match status" value="1"/>
</dbReference>
<dbReference type="InterPro" id="IPR001247">
    <property type="entry name" value="ExoRNase_PH_dom1"/>
</dbReference>
<dbReference type="InterPro" id="IPR015847">
    <property type="entry name" value="ExoRNase_PH_dom2"/>
</dbReference>
<dbReference type="InterPro" id="IPR036345">
    <property type="entry name" value="ExoRNase_PH_dom2_sf"/>
</dbReference>
<dbReference type="InterPro" id="IPR027408">
    <property type="entry name" value="PNPase/RNase_PH_dom_sf"/>
</dbReference>
<dbReference type="InterPro" id="IPR020568">
    <property type="entry name" value="Ribosomal_Su5_D2-typ_SF"/>
</dbReference>
<dbReference type="InterPro" id="IPR050080">
    <property type="entry name" value="RNase_PH"/>
</dbReference>
<dbReference type="InterPro" id="IPR002381">
    <property type="entry name" value="RNase_PH_bac-type"/>
</dbReference>
<dbReference type="InterPro" id="IPR018336">
    <property type="entry name" value="RNase_PH_CS"/>
</dbReference>
<dbReference type="NCBIfam" id="TIGR01966">
    <property type="entry name" value="RNasePH"/>
    <property type="match status" value="1"/>
</dbReference>
<dbReference type="PANTHER" id="PTHR11953">
    <property type="entry name" value="EXOSOME COMPLEX COMPONENT"/>
    <property type="match status" value="1"/>
</dbReference>
<dbReference type="PANTHER" id="PTHR11953:SF0">
    <property type="entry name" value="EXOSOME COMPLEX COMPONENT RRP41"/>
    <property type="match status" value="1"/>
</dbReference>
<dbReference type="Pfam" id="PF01138">
    <property type="entry name" value="RNase_PH"/>
    <property type="match status" value="1"/>
</dbReference>
<dbReference type="Pfam" id="PF03725">
    <property type="entry name" value="RNase_PH_C"/>
    <property type="match status" value="1"/>
</dbReference>
<dbReference type="SUPFAM" id="SSF55666">
    <property type="entry name" value="Ribonuclease PH domain 2-like"/>
    <property type="match status" value="1"/>
</dbReference>
<dbReference type="SUPFAM" id="SSF54211">
    <property type="entry name" value="Ribosomal protein S5 domain 2-like"/>
    <property type="match status" value="1"/>
</dbReference>
<dbReference type="PROSITE" id="PS01277">
    <property type="entry name" value="RIBONUCLEASE_PH"/>
    <property type="match status" value="1"/>
</dbReference>
<keyword id="KW-0548">Nucleotidyltransferase</keyword>
<keyword id="KW-0694">RNA-binding</keyword>
<keyword id="KW-0698">rRNA processing</keyword>
<keyword id="KW-0808">Transferase</keyword>
<keyword id="KW-0819">tRNA processing</keyword>
<keyword id="KW-0820">tRNA-binding</keyword>